<gene>
    <name type="primary">SUB3</name>
</gene>
<reference key="1">
    <citation type="submission" date="2003-10" db="EMBL/GenBank/DDBJ databases">
        <title>Subtilisin-like proteases gene family in Dermatophytes.</title>
        <authorList>
            <person name="Jousson O."/>
            <person name="Monod M."/>
        </authorList>
    </citation>
    <scope>NUCLEOTIDE SEQUENCE [GENOMIC DNA]</scope>
</reference>
<organism>
    <name type="scientific">Trichophyton verrucosum</name>
    <name type="common">Cattle ringworm fungus</name>
    <dbReference type="NCBI Taxonomy" id="63417"/>
    <lineage>
        <taxon>Eukaryota</taxon>
        <taxon>Fungi</taxon>
        <taxon>Dikarya</taxon>
        <taxon>Ascomycota</taxon>
        <taxon>Pezizomycotina</taxon>
        <taxon>Eurotiomycetes</taxon>
        <taxon>Eurotiomycetidae</taxon>
        <taxon>Onygenales</taxon>
        <taxon>Arthrodermataceae</taxon>
        <taxon>Trichophyton</taxon>
    </lineage>
</organism>
<feature type="signal peptide" evidence="2">
    <location>
        <begin position="1"/>
        <end position="19"/>
    </location>
</feature>
<feature type="propeptide" id="PRO_0000380784" evidence="1">
    <location>
        <begin position="20"/>
        <end position="116"/>
    </location>
</feature>
<feature type="chain" id="PRO_0000380785" description="Subtilisin-like protease 3">
    <location>
        <begin position="117"/>
        <end position="397"/>
    </location>
</feature>
<feature type="domain" description="Inhibitor I9" evidence="2">
    <location>
        <begin position="35"/>
        <end position="116"/>
    </location>
</feature>
<feature type="domain" description="Peptidase S8" evidence="3">
    <location>
        <begin position="126"/>
        <end position="397"/>
    </location>
</feature>
<feature type="active site" description="Charge relay system" evidence="3">
    <location>
        <position position="158"/>
    </location>
</feature>
<feature type="active site" description="Charge relay system" evidence="3">
    <location>
        <position position="189"/>
    </location>
</feature>
<feature type="active site" description="Charge relay system" evidence="3">
    <location>
        <position position="344"/>
    </location>
</feature>
<feature type="glycosylation site" description="N-linked (GlcNAc...) asparagine" evidence="2">
    <location>
        <position position="250"/>
    </location>
</feature>
<feature type="glycosylation site" description="N-linked (GlcNAc...) asparagine" evidence="2">
    <location>
        <position position="393"/>
    </location>
</feature>
<dbReference type="EC" id="3.4.21.-"/>
<dbReference type="EMBL" id="AY439107">
    <property type="protein sequence ID" value="AAS45675.1"/>
    <property type="molecule type" value="Genomic_DNA"/>
</dbReference>
<dbReference type="SMR" id="Q5VJ75"/>
<dbReference type="MEROPS" id="S08.115"/>
<dbReference type="GlyCosmos" id="Q5VJ75">
    <property type="glycosylation" value="2 sites, No reported glycans"/>
</dbReference>
<dbReference type="GO" id="GO:0005576">
    <property type="term" value="C:extracellular region"/>
    <property type="evidence" value="ECO:0007669"/>
    <property type="project" value="UniProtKB-SubCell"/>
</dbReference>
<dbReference type="GO" id="GO:0004252">
    <property type="term" value="F:serine-type endopeptidase activity"/>
    <property type="evidence" value="ECO:0007669"/>
    <property type="project" value="InterPro"/>
</dbReference>
<dbReference type="GO" id="GO:0006508">
    <property type="term" value="P:proteolysis"/>
    <property type="evidence" value="ECO:0007669"/>
    <property type="project" value="UniProtKB-KW"/>
</dbReference>
<dbReference type="CDD" id="cd04077">
    <property type="entry name" value="Peptidases_S8_PCSK9_ProteinaseK_like"/>
    <property type="match status" value="1"/>
</dbReference>
<dbReference type="FunFam" id="3.40.50.200:FF:000014">
    <property type="entry name" value="Proteinase K"/>
    <property type="match status" value="1"/>
</dbReference>
<dbReference type="Gene3D" id="3.30.70.80">
    <property type="entry name" value="Peptidase S8 propeptide/proteinase inhibitor I9"/>
    <property type="match status" value="1"/>
</dbReference>
<dbReference type="Gene3D" id="3.40.50.200">
    <property type="entry name" value="Peptidase S8/S53 domain"/>
    <property type="match status" value="1"/>
</dbReference>
<dbReference type="InterPro" id="IPR034193">
    <property type="entry name" value="PCSK9_ProteinaseK-like"/>
</dbReference>
<dbReference type="InterPro" id="IPR000209">
    <property type="entry name" value="Peptidase_S8/S53_dom"/>
</dbReference>
<dbReference type="InterPro" id="IPR036852">
    <property type="entry name" value="Peptidase_S8/S53_dom_sf"/>
</dbReference>
<dbReference type="InterPro" id="IPR023828">
    <property type="entry name" value="Peptidase_S8_Ser-AS"/>
</dbReference>
<dbReference type="InterPro" id="IPR050131">
    <property type="entry name" value="Peptidase_S8_subtilisin-like"/>
</dbReference>
<dbReference type="InterPro" id="IPR015500">
    <property type="entry name" value="Peptidase_S8_subtilisin-rel"/>
</dbReference>
<dbReference type="InterPro" id="IPR010259">
    <property type="entry name" value="S8pro/Inhibitor_I9"/>
</dbReference>
<dbReference type="InterPro" id="IPR037045">
    <property type="entry name" value="S8pro/Inhibitor_I9_sf"/>
</dbReference>
<dbReference type="PANTHER" id="PTHR43806:SF11">
    <property type="entry name" value="CEREVISIN-RELATED"/>
    <property type="match status" value="1"/>
</dbReference>
<dbReference type="PANTHER" id="PTHR43806">
    <property type="entry name" value="PEPTIDASE S8"/>
    <property type="match status" value="1"/>
</dbReference>
<dbReference type="Pfam" id="PF05922">
    <property type="entry name" value="Inhibitor_I9"/>
    <property type="match status" value="1"/>
</dbReference>
<dbReference type="Pfam" id="PF00082">
    <property type="entry name" value="Peptidase_S8"/>
    <property type="match status" value="1"/>
</dbReference>
<dbReference type="PRINTS" id="PR00723">
    <property type="entry name" value="SUBTILISIN"/>
</dbReference>
<dbReference type="SUPFAM" id="SSF54897">
    <property type="entry name" value="Protease propeptides/inhibitors"/>
    <property type="match status" value="1"/>
</dbReference>
<dbReference type="SUPFAM" id="SSF52743">
    <property type="entry name" value="Subtilisin-like"/>
    <property type="match status" value="1"/>
</dbReference>
<dbReference type="PROSITE" id="PS51892">
    <property type="entry name" value="SUBTILASE"/>
    <property type="match status" value="1"/>
</dbReference>
<dbReference type="PROSITE" id="PS00138">
    <property type="entry name" value="SUBTILASE_SER"/>
    <property type="match status" value="1"/>
</dbReference>
<comment type="function">
    <text evidence="1">Secreted subtilisin-like serine protease with keratinolytic activity that contributes to pathogenicity.</text>
</comment>
<comment type="subcellular location">
    <subcellularLocation>
        <location evidence="1">Secreted</location>
    </subcellularLocation>
</comment>
<comment type="similarity">
    <text evidence="4">Belongs to the peptidase S8 family.</text>
</comment>
<protein>
    <recommendedName>
        <fullName>Subtilisin-like protease 3</fullName>
        <ecNumber>3.4.21.-</ecNumber>
    </recommendedName>
</protein>
<evidence type="ECO:0000250" key="1"/>
<evidence type="ECO:0000255" key="2"/>
<evidence type="ECO:0000255" key="3">
    <source>
        <dbReference type="PROSITE-ProRule" id="PRU01240"/>
    </source>
</evidence>
<evidence type="ECO:0000305" key="4"/>
<proteinExistence type="inferred from homology"/>
<accession>Q5VJ75</accession>
<keyword id="KW-0325">Glycoprotein</keyword>
<keyword id="KW-0378">Hydrolase</keyword>
<keyword id="KW-0645">Protease</keyword>
<keyword id="KW-0964">Secreted</keyword>
<keyword id="KW-0720">Serine protease</keyword>
<keyword id="KW-0732">Signal</keyword>
<keyword id="KW-0843">Virulence</keyword>
<keyword id="KW-0865">Zymogen</keyword>
<sequence length="397" mass="41015">MGCIKVISVFLAAIAAVDARAFFHNRGGNDVIPNSYIVVMKDGVTAEDFDSHISSVAATHSLNKAKRGSETVGHKDSFNINGWRAYNGHFDEATIESILKDDKVNYVEHDRVVKLAALTTQPNAPTWGLGRVSHKAPGNKDFVYDSSAGQGITIYGVDTGIDIRHPEFAGRIRWGTNTVDNDNTDGNGHGTHTAGTFAGTTYGVAKKANIVAVKVLSAGGSGSTSGVIKGIDWCVTDARSKNALGKAALNLSLGGSFSQASNDAVTRAQEAGIFVAVAAGNDNRDAKNSSPASAPAVCTAASSTIDDQKSSFSNWGTIVDIYAPGSNILSAAPGGGTRTLSGTSMASPHVCGVGAAMLAQGVSVAQACDRLKQIGNAVIRNPGTGTTNRLLYNGSGR</sequence>
<name>SUB3_TRIVC</name>